<keyword id="KW-0010">Activator</keyword>
<keyword id="KW-0025">Alternative splicing</keyword>
<keyword id="KW-0131">Cell cycle</keyword>
<keyword id="KW-0238">DNA-binding</keyword>
<keyword id="KW-0539">Nucleus</keyword>
<keyword id="KW-0597">Phosphoprotein</keyword>
<keyword id="KW-1185">Reference proteome</keyword>
<keyword id="KW-0677">Repeat</keyword>
<keyword id="KW-0804">Transcription</keyword>
<keyword id="KW-0805">Transcription regulation</keyword>
<keyword id="KW-0043">Tumor suppressor</keyword>
<name>DMTF1_MOUSE</name>
<comment type="function">
    <text evidence="4 5 6 7 10 11 12 13">Transcriptional activator which activates the CDKN2A/ARF locus in response to Ras-Raf signaling, thereby promoting p53/TP53-dependent growth arrest. May also cooperate with MYB to activate transcription of the ANPEP gene. Binds to the consensus sequence 5'-CCCG[GT]ATGT-3'.</text>
</comment>
<comment type="subunit">
    <text evidence="11 12">Interacts with the D-type cyclins CCND1, CCND2 and CCND3. Interaction with D-type cyclins may modulate transcriptional activation by this protein.</text>
</comment>
<comment type="subcellular location">
    <subcellularLocation>
        <location evidence="2 4 8 10 12">Nucleus</location>
    </subcellularLocation>
</comment>
<comment type="alternative products">
    <event type="alternative splicing"/>
    <isoform>
        <id>Q8CE22-1</id>
        <name>1</name>
        <sequence type="displayed"/>
    </isoform>
    <isoform>
        <id>Q8CE22-2</id>
        <name>2</name>
        <sequence type="described" ref="VSP_032097"/>
    </isoform>
    <isoform>
        <id>Q8CE22-3</id>
        <name>3</name>
        <sequence type="described" ref="VSP_032097 VSP_032100 VSP_032101"/>
    </isoform>
    <isoform>
        <id>Q8CE22-4</id>
        <name>4</name>
        <sequence type="described" ref="VSP_032094 VSP_032098 VSP_032099"/>
    </isoform>
    <isoform>
        <id>Q8CE22-5</id>
        <name>5</name>
        <sequence type="described" ref="VSP_032095 VSP_032096"/>
    </isoform>
</comment>
<comment type="tissue specificity">
    <text evidence="5 8 11">Ubiquitously expressed (at mRNA level). Expressed in brain, intestine, kidney, lung, pancreas, skin, spleen and tongue (at protein level). Expressed at high levels in testis and thymus (at protein level). In all tissues examined, expression is predominant in non-proliferating and differentiated cell types. These include epithelial, interstitial and smooth muscle cells of the intestine, differentiated spermatids, sperm and interstitial cells of the testis, and lymphoid cells of the medullary compartment of the thymus.</text>
</comment>
<comment type="developmental stage">
    <text evidence="8 11">Expressed throughout the cell cycle. Expression is highest in G0 and G1 phases and decreases during S and G2/M phases.</text>
</comment>
<comment type="induction">
    <text evidence="7 8 9">Expression is induced by activation of the Ras-Raf signaling pathway, and this may require JUN and JUNB. Expression can be repressed by E2F1, E2F2, E2F3 and E2F4. Expression is also repressed by non-classical inhibitors of NF-kappa-B signaling such as doxorubicin, daunorubicin and UVC, and by the NF-kappa-B p65 subunit (RELA).</text>
</comment>
<comment type="PTM">
    <text evidence="11 12">Phosphorylated by the cyclin-D2/CDK4, cyclin-D3/CDK4 and cyclin-D2/CDK6 complexes and to a lesser extent by the cyclin-D1/CDK4 complex.</text>
</comment>
<comment type="disruption phenotype">
    <text evidence="5 6 10">Mice spontaneously develop tumors with a mean latency around 80 weeks. The most common tumor types are pulmonary adenomas, adenocarcinomas, hepatocellular tumors, B-cell lymphomas and vascular tumors. The protein appears to be haplo-insufficient for tumor suppression, as heterozygous animals are also prone to spontaneous tumor development. Mice lacking this protein also exhibit enhanced susceptibility to tumor induction by activated Ras or the application of dimethylbenzanthracene (DMBA) or ionizing radiation. Early passage murine embryonic fibroblasts (MEFs) from animals lacking this protein are susceptible to transformation by activated Ras alone due to functional inactivation of the ARF-p53 pathway. Late passage MEFs from animals lacking this protein escape senescence without disrupting CDKN2A/ARF or p53 function.</text>
</comment>
<comment type="miscellaneous">
    <molecule>Isoform 3</molecule>
    <text evidence="16">May be produced at very low levels due to a premature stop codon in the mRNA, leading to nonsense-mediated mRNA decay.</text>
</comment>
<comment type="miscellaneous">
    <molecule>Isoform 4</molecule>
    <text evidence="16">May be produced at very low levels due to a premature stop codon in the mRNA, leading to nonsense-mediated mRNA decay.</text>
</comment>
<comment type="miscellaneous">
    <molecule>Isoform 5</molecule>
    <text evidence="16">May be produced at very low levels due to a premature stop codon in the mRNA, leading to nonsense-mediated mRNA decay.</text>
</comment>
<comment type="similarity">
    <text evidence="16">Belongs to the DMTF1 family.</text>
</comment>
<feature type="chain" id="PRO_0000323730" description="Cyclin-D-binding Myb-like transcription factor 1">
    <location>
        <begin position="1"/>
        <end position="761"/>
    </location>
</feature>
<feature type="domain" description="Myb-like 1" evidence="1">
    <location>
        <begin position="225"/>
        <end position="263"/>
    </location>
</feature>
<feature type="domain" description="HTH myb-type" evidence="2">
    <location>
        <begin position="268"/>
        <end position="333"/>
    </location>
</feature>
<feature type="domain" description="Myb-like 2" evidence="1">
    <location>
        <begin position="339"/>
        <end position="388"/>
    </location>
</feature>
<feature type="DNA-binding region" description="H-T-H motif" evidence="2">
    <location>
        <begin position="306"/>
        <end position="329"/>
    </location>
</feature>
<feature type="region of interest" description="Interaction with CCND2">
    <location>
        <begin position="1"/>
        <end position="237"/>
    </location>
</feature>
<feature type="region of interest" description="Disordered" evidence="3">
    <location>
        <begin position="24"/>
        <end position="51"/>
    </location>
</feature>
<feature type="region of interest" description="Required for DNA-binding">
    <location>
        <begin position="87"/>
        <end position="458"/>
    </location>
</feature>
<feature type="region of interest" description="Required for transcriptional activation">
    <location>
        <begin position="87"/>
        <end position="170"/>
    </location>
</feature>
<feature type="region of interest" description="Interaction with CCND1, CCND2 and CCND3" evidence="11">
    <location>
        <begin position="176"/>
        <end position="761"/>
    </location>
</feature>
<feature type="region of interest" description="Required for transcriptional activation">
    <location>
        <begin position="459"/>
        <end position="761"/>
    </location>
</feature>
<feature type="region of interest" description="Disordered" evidence="3">
    <location>
        <begin position="584"/>
        <end position="625"/>
    </location>
</feature>
<feature type="region of interest" description="Disordered" evidence="3">
    <location>
        <begin position="740"/>
        <end position="761"/>
    </location>
</feature>
<feature type="compositionally biased region" description="Acidic residues" evidence="3">
    <location>
        <begin position="37"/>
        <end position="47"/>
    </location>
</feature>
<feature type="splice variant" id="VSP_032094" description="In isoform 4." evidence="14 15">
    <original>DPDEVDSEDSTEPPHKRLCLSSEDDQSIDDATPCISVVALPL</original>
    <variation>V</variation>
    <location>
        <begin position="37"/>
        <end position="78"/>
    </location>
</feature>
<feature type="splice variant" id="VSP_032095" description="In isoform 5." evidence="15">
    <original>LRIKHGNDWATIGAALGRSASSVKDRCRLMKDTCNT</original>
    <variation>QLWTPHNKGHTFKLWLSKVLLPTTCQPVRREKKNEE</variation>
    <location>
        <begin position="238"/>
        <end position="273"/>
    </location>
</feature>
<feature type="splice variant" id="VSP_032096" description="In isoform 5." evidence="15">
    <location>
        <begin position="274"/>
        <end position="761"/>
    </location>
</feature>
<feature type="splice variant" id="VSP_032097" description="In isoform 2 and isoform 3." evidence="15">
    <original>VLIKGLKQLHENQKNNPVLLENKSGSGVPNSNCNSSVQHVQIRVARLEDNTAISPSPMAALQIPVQITHVS</original>
    <variation>A</variation>
    <location>
        <begin position="401"/>
        <end position="471"/>
    </location>
</feature>
<feature type="splice variant" id="VSP_032098" description="In isoform 4." evidence="14 15">
    <original>LIKGLKQLHENQKNNPVLLENKSGSGVPNSNCNSSVQHVQIRVARLEDNT</original>
    <variation>YSMFRSESPAWKIIQPSLQAPWQRCRFQSRSPTSLQQTPLLLLLTQKQSH</variation>
    <location>
        <begin position="402"/>
        <end position="451"/>
    </location>
</feature>
<feature type="splice variant" id="VSP_032099" description="In isoform 4." evidence="14 15">
    <location>
        <begin position="452"/>
        <end position="761"/>
    </location>
</feature>
<feature type="splice variant" id="VSP_032100" description="In isoform 3." evidence="15">
    <original>SFHLQPTGTPGTYLLQTSSSQGLPL</original>
    <variation>KRKLLLLHLVMGTRGHALMVMEVKG</variation>
    <location>
        <begin position="500"/>
        <end position="524"/>
    </location>
</feature>
<feature type="splice variant" id="VSP_032101" description="In isoform 3." evidence="15">
    <location>
        <begin position="525"/>
        <end position="761"/>
    </location>
</feature>
<feature type="mutagenesis site" description="Abrogates DNA-binding." evidence="12 13">
    <original>K</original>
    <variation>E</variation>
    <location>
        <position position="319"/>
    </location>
</feature>
<feature type="sequence conflict" description="In Ref. 2; BAC30386." evidence="16" ref="2">
    <original>E</original>
    <variation>Q</variation>
    <location>
        <position position="44"/>
    </location>
</feature>
<feature type="sequence conflict" description="In Ref. 2; BAC30386." evidence="16" ref="2">
    <original>V</original>
    <variation>F</variation>
    <location>
        <position position="73"/>
    </location>
</feature>
<feature type="sequence conflict" description="In Ref. 2; BAC30386." evidence="16" ref="2">
    <original>E</original>
    <variation>Q</variation>
    <location>
        <position position="80"/>
    </location>
</feature>
<feature type="sequence conflict" description="In Ref. 2; BAC26325." evidence="16" ref="2">
    <original>A</original>
    <variation>G</variation>
    <location>
        <position position="180"/>
    </location>
</feature>
<feature type="sequence conflict" description="In Ref. 1; AAC52878." evidence="16" ref="1">
    <original>V</original>
    <variation>A</variation>
    <location>
        <position position="480"/>
    </location>
</feature>
<feature type="sequence conflict" description="In Ref. 1; AAC52878." evidence="16" ref="1">
    <original>H</original>
    <variation>P</variation>
    <location>
        <position position="502"/>
    </location>
</feature>
<feature type="sequence conflict" description="In Ref. 1; AAC52878." evidence="16" ref="1">
    <original>V</original>
    <variation>L</variation>
    <location>
        <position position="532"/>
    </location>
</feature>
<accession>Q8CE22</accession>
<accession>P70413</accession>
<accession>Q3TUR9</accession>
<accession>Q80VR8</accession>
<accession>Q8BQX6</accession>
<accession>Q8CA56</accession>
<accession>Q8CCZ0</accession>
<dbReference type="EMBL" id="U70017">
    <property type="protein sequence ID" value="AAC52878.1"/>
    <property type="molecule type" value="mRNA"/>
</dbReference>
<dbReference type="EMBL" id="AK029147">
    <property type="protein sequence ID" value="BAC26325.1"/>
    <property type="molecule type" value="mRNA"/>
</dbReference>
<dbReference type="EMBL" id="AK031887">
    <property type="protein sequence ID" value="BAC27593.1"/>
    <property type="molecule type" value="mRNA"/>
</dbReference>
<dbReference type="EMBL" id="AK039563">
    <property type="protein sequence ID" value="BAC30386.1"/>
    <property type="molecule type" value="mRNA"/>
</dbReference>
<dbReference type="EMBL" id="AK046201">
    <property type="protein sequence ID" value="BAC32635.1"/>
    <property type="molecule type" value="mRNA"/>
</dbReference>
<dbReference type="EMBL" id="AK160595">
    <property type="protein sequence ID" value="BAE35902.1"/>
    <property type="molecule type" value="mRNA"/>
</dbReference>
<dbReference type="EMBL" id="BC045141">
    <property type="protein sequence ID" value="AAH45141.1"/>
    <property type="molecule type" value="mRNA"/>
</dbReference>
<dbReference type="CCDS" id="CCDS19088.1">
    <molecule id="Q8CE22-1"/>
</dbReference>
<dbReference type="CCDS" id="CCDS51412.1">
    <molecule id="Q8CE22-2"/>
</dbReference>
<dbReference type="RefSeq" id="NP_001103797.1">
    <molecule id="Q8CE22-2"/>
    <property type="nucleotide sequence ID" value="NM_001110327.2"/>
</dbReference>
<dbReference type="RefSeq" id="NP_001412454.1">
    <molecule id="Q8CE22-2"/>
    <property type="nucleotide sequence ID" value="NM_001425525.1"/>
</dbReference>
<dbReference type="RefSeq" id="NP_035936.3">
    <molecule id="Q8CE22-1"/>
    <property type="nucleotide sequence ID" value="NM_011806.3"/>
</dbReference>
<dbReference type="RefSeq" id="XP_011238970.1">
    <molecule id="Q8CE22-1"/>
    <property type="nucleotide sequence ID" value="XM_011240668.3"/>
</dbReference>
<dbReference type="SMR" id="Q8CE22"/>
<dbReference type="FunCoup" id="Q8CE22">
    <property type="interactions" value="4534"/>
</dbReference>
<dbReference type="IntAct" id="Q8CE22">
    <property type="interactions" value="1"/>
</dbReference>
<dbReference type="STRING" id="10090.ENSMUSP00000071815"/>
<dbReference type="GlyGen" id="Q8CE22">
    <property type="glycosylation" value="1 site"/>
</dbReference>
<dbReference type="iPTMnet" id="Q8CE22"/>
<dbReference type="PhosphoSitePlus" id="Q8CE22"/>
<dbReference type="PaxDb" id="10090-ENSMUSP00000071815"/>
<dbReference type="ProteomicsDB" id="279548">
    <molecule id="Q8CE22-1"/>
</dbReference>
<dbReference type="ProteomicsDB" id="279549">
    <molecule id="Q8CE22-2"/>
</dbReference>
<dbReference type="ProteomicsDB" id="279550">
    <molecule id="Q8CE22-3"/>
</dbReference>
<dbReference type="ProteomicsDB" id="279551">
    <molecule id="Q8CE22-4"/>
</dbReference>
<dbReference type="ProteomicsDB" id="279552">
    <molecule id="Q8CE22-5"/>
</dbReference>
<dbReference type="Antibodypedia" id="15263">
    <property type="antibodies" value="250 antibodies from 25 providers"/>
</dbReference>
<dbReference type="DNASU" id="23857"/>
<dbReference type="Ensembl" id="ENSMUST00000071921.13">
    <molecule id="Q8CE22-1"/>
    <property type="protein sequence ID" value="ENSMUSP00000071815.6"/>
    <property type="gene ID" value="ENSMUSG00000042508.17"/>
</dbReference>
<dbReference type="Ensembl" id="ENSMUST00000095017.11">
    <molecule id="Q8CE22-2"/>
    <property type="protein sequence ID" value="ENSMUSP00000092627.5"/>
    <property type="gene ID" value="ENSMUSG00000042508.17"/>
</dbReference>
<dbReference type="Ensembl" id="ENSMUST00000183448.8">
    <molecule id="Q8CE22-5"/>
    <property type="protein sequence ID" value="ENSMUSP00000139042.2"/>
    <property type="gene ID" value="ENSMUSG00000042508.17"/>
</dbReference>
<dbReference type="Ensembl" id="ENSMUST00000184159.8">
    <molecule id="Q8CE22-4"/>
    <property type="protein sequence ID" value="ENSMUSP00000139231.2"/>
    <property type="gene ID" value="ENSMUSG00000042508.17"/>
</dbReference>
<dbReference type="Ensembl" id="ENSMUST00000184401.8">
    <molecule id="Q8CE22-5"/>
    <property type="protein sequence ID" value="ENSMUSP00000139281.2"/>
    <property type="gene ID" value="ENSMUSG00000042508.17"/>
</dbReference>
<dbReference type="Ensembl" id="ENSMUST00000184888.8">
    <molecule id="Q8CE22-5"/>
    <property type="protein sequence ID" value="ENSMUSP00000139164.2"/>
    <property type="gene ID" value="ENSMUSG00000042508.17"/>
</dbReference>
<dbReference type="GeneID" id="23857"/>
<dbReference type="KEGG" id="mmu:23857"/>
<dbReference type="UCSC" id="uc008wky.2">
    <molecule id="Q8CE22-1"/>
    <property type="organism name" value="mouse"/>
</dbReference>
<dbReference type="UCSC" id="uc008wkz.2">
    <molecule id="Q8CE22-2"/>
    <property type="organism name" value="mouse"/>
</dbReference>
<dbReference type="UCSC" id="uc008wld.2">
    <molecule id="Q8CE22-3"/>
    <property type="organism name" value="mouse"/>
</dbReference>
<dbReference type="AGR" id="MGI:1344415"/>
<dbReference type="CTD" id="9988"/>
<dbReference type="MGI" id="MGI:1344415">
    <property type="gene designation" value="Dmtf1"/>
</dbReference>
<dbReference type="VEuPathDB" id="HostDB:ENSMUSG00000042508"/>
<dbReference type="eggNOG" id="KOG0051">
    <property type="taxonomic scope" value="Eukaryota"/>
</dbReference>
<dbReference type="GeneTree" id="ENSGT00940000156016"/>
<dbReference type="HOGENOM" id="CLU_021360_0_0_1"/>
<dbReference type="InParanoid" id="Q8CE22"/>
<dbReference type="OMA" id="LQCHTPR"/>
<dbReference type="OrthoDB" id="39591at2759"/>
<dbReference type="PhylomeDB" id="Q8CE22"/>
<dbReference type="TreeFam" id="TF333537"/>
<dbReference type="BioGRID-ORCS" id="23857">
    <property type="hits" value="4 hits in 83 CRISPR screens"/>
</dbReference>
<dbReference type="ChiTaRS" id="Dmtf1">
    <property type="organism name" value="mouse"/>
</dbReference>
<dbReference type="PRO" id="PR:Q8CE22"/>
<dbReference type="Proteomes" id="UP000000589">
    <property type="component" value="Chromosome 5"/>
</dbReference>
<dbReference type="RNAct" id="Q8CE22">
    <property type="molecule type" value="protein"/>
</dbReference>
<dbReference type="Bgee" id="ENSMUSG00000042508">
    <property type="expression patterns" value="Expressed in rostral migratory stream and 257 other cell types or tissues"/>
</dbReference>
<dbReference type="ExpressionAtlas" id="Q8CE22">
    <property type="expression patterns" value="baseline and differential"/>
</dbReference>
<dbReference type="GO" id="GO:0005634">
    <property type="term" value="C:nucleus"/>
    <property type="evidence" value="ECO:0007669"/>
    <property type="project" value="UniProtKB-SubCell"/>
</dbReference>
<dbReference type="GO" id="GO:0001228">
    <property type="term" value="F:DNA-binding transcription activator activity, RNA polymerase II-specific"/>
    <property type="evidence" value="ECO:0000314"/>
    <property type="project" value="NTNU_SB"/>
</dbReference>
<dbReference type="GO" id="GO:0000978">
    <property type="term" value="F:RNA polymerase II cis-regulatory region sequence-specific DNA binding"/>
    <property type="evidence" value="ECO:0000314"/>
    <property type="project" value="NTNU_SB"/>
</dbReference>
<dbReference type="GO" id="GO:0045944">
    <property type="term" value="P:positive regulation of transcription by RNA polymerase II"/>
    <property type="evidence" value="ECO:0000314"/>
    <property type="project" value="NTNU_SB"/>
</dbReference>
<dbReference type="CDD" id="cd00167">
    <property type="entry name" value="SANT"/>
    <property type="match status" value="3"/>
</dbReference>
<dbReference type="FunFam" id="1.10.10.60:FF:000114">
    <property type="entry name" value="cyclin-D-binding Myb-like transcription factor 1 isoform X1"/>
    <property type="match status" value="1"/>
</dbReference>
<dbReference type="FunFam" id="1.10.10.60:FF:000139">
    <property type="entry name" value="cyclin-D-binding Myb-like transcription factor 1 isoform X2"/>
    <property type="match status" value="1"/>
</dbReference>
<dbReference type="Gene3D" id="1.10.10.60">
    <property type="entry name" value="Homeodomain-like"/>
    <property type="match status" value="2"/>
</dbReference>
<dbReference type="InterPro" id="IPR051651">
    <property type="entry name" value="DMTF1_DNA-bind_reg"/>
</dbReference>
<dbReference type="InterPro" id="IPR046775">
    <property type="entry name" value="DMTF1_N"/>
</dbReference>
<dbReference type="InterPro" id="IPR009057">
    <property type="entry name" value="Homeodomain-like_sf"/>
</dbReference>
<dbReference type="InterPro" id="IPR017930">
    <property type="entry name" value="Myb_dom"/>
</dbReference>
<dbReference type="InterPro" id="IPR001005">
    <property type="entry name" value="SANT/Myb"/>
</dbReference>
<dbReference type="PANTHER" id="PTHR46380">
    <property type="entry name" value="CYCLIN-D-BINDING MYB-LIKE TRANSCRIPTION FACTOR 1"/>
    <property type="match status" value="1"/>
</dbReference>
<dbReference type="PANTHER" id="PTHR46380:SF1">
    <property type="entry name" value="CYCLIN-D-BINDING MYB-LIKE TRANSCRIPTION FACTOR 1"/>
    <property type="match status" value="1"/>
</dbReference>
<dbReference type="Pfam" id="PF20588">
    <property type="entry name" value="DMTF1_N"/>
    <property type="match status" value="1"/>
</dbReference>
<dbReference type="Pfam" id="PF00249">
    <property type="entry name" value="Myb_DNA-binding"/>
    <property type="match status" value="2"/>
</dbReference>
<dbReference type="SMART" id="SM00717">
    <property type="entry name" value="SANT"/>
    <property type="match status" value="3"/>
</dbReference>
<dbReference type="SUPFAM" id="SSF46689">
    <property type="entry name" value="Homeodomain-like"/>
    <property type="match status" value="3"/>
</dbReference>
<dbReference type="PROSITE" id="PS51294">
    <property type="entry name" value="HTH_MYB"/>
    <property type="match status" value="1"/>
</dbReference>
<dbReference type="PROSITE" id="PS50090">
    <property type="entry name" value="MYB_LIKE"/>
    <property type="match status" value="2"/>
</dbReference>
<gene>
    <name type="primary">Dmtf1</name>
    <name type="synonym">Dmp1</name>
</gene>
<evidence type="ECO:0000255" key="1">
    <source>
        <dbReference type="PROSITE-ProRule" id="PRU00133"/>
    </source>
</evidence>
<evidence type="ECO:0000255" key="2">
    <source>
        <dbReference type="PROSITE-ProRule" id="PRU00625"/>
    </source>
</evidence>
<evidence type="ECO:0000256" key="3">
    <source>
        <dbReference type="SAM" id="MobiDB-lite"/>
    </source>
</evidence>
<evidence type="ECO:0000269" key="4">
    <source>
    </source>
</evidence>
<evidence type="ECO:0000269" key="5">
    <source>
    </source>
</evidence>
<evidence type="ECO:0000269" key="6">
    <source>
    </source>
</evidence>
<evidence type="ECO:0000269" key="7">
    <source>
    </source>
</evidence>
<evidence type="ECO:0000269" key="8">
    <source>
    </source>
</evidence>
<evidence type="ECO:0000269" key="9">
    <source>
    </source>
</evidence>
<evidence type="ECO:0000269" key="10">
    <source>
    </source>
</evidence>
<evidence type="ECO:0000269" key="11">
    <source>
    </source>
</evidence>
<evidence type="ECO:0000269" key="12">
    <source>
    </source>
</evidence>
<evidence type="ECO:0000269" key="13">
    <source>
    </source>
</evidence>
<evidence type="ECO:0000303" key="14">
    <source>
    </source>
</evidence>
<evidence type="ECO:0000303" key="15">
    <source>
    </source>
</evidence>
<evidence type="ECO:0000305" key="16"/>
<proteinExistence type="evidence at protein level"/>
<protein>
    <recommendedName>
        <fullName>Cyclin-D-binding Myb-like transcription factor 1</fullName>
    </recommendedName>
    <alternativeName>
        <fullName>Cyclin-D-interacting Myb-like protein 1</fullName>
        <shortName>mDmp1</shortName>
    </alternativeName>
</protein>
<organism>
    <name type="scientific">Mus musculus</name>
    <name type="common">Mouse</name>
    <dbReference type="NCBI Taxonomy" id="10090"/>
    <lineage>
        <taxon>Eukaryota</taxon>
        <taxon>Metazoa</taxon>
        <taxon>Chordata</taxon>
        <taxon>Craniata</taxon>
        <taxon>Vertebrata</taxon>
        <taxon>Euteleostomi</taxon>
        <taxon>Mammalia</taxon>
        <taxon>Eutheria</taxon>
        <taxon>Euarchontoglires</taxon>
        <taxon>Glires</taxon>
        <taxon>Rodentia</taxon>
        <taxon>Myomorpha</taxon>
        <taxon>Muroidea</taxon>
        <taxon>Muridae</taxon>
        <taxon>Murinae</taxon>
        <taxon>Mus</taxon>
        <taxon>Mus</taxon>
    </lineage>
</organism>
<sequence>MSTVEEDSDTVTVETVNSVTFTQDTDGNLILHCPQNDPDEVDSEDSTEPPHKRLCLSSEDDQSIDDATPCISVVALPLSENDQSFEVTMTATTEVADDELSEGTVTQIQILQNDQLDEISPLGTEEVSAVSQAWFTTKEDKDSLTNKGHKWKQGMWSKEEIDILMNNIERYLKARGIKDATEIIFEMSKDERKDFYRTIAWGLNRPLFAVYRRVLRMYDDRNHVGKYTPEEIEKLKELRIKHGNDWATIGAALGRSASSVKDRCRLMKDTCNTGKWTEEEEKRLAEVVHELTSTEPGDIVTQGVSWAAVAERVGTRSEKQCRSKWLNYLNWKQSGGTEWTKEDEINLILRIAELDVADENDINWDLLAEGWSSVRSPQWLRSKWWTIKRQIANHKDVSFPVLIKGLKQLHENQKNNPVLLENKSGSGVPNSNCNSSVQHVQIRVARLEDNTAISPSPMAALQIPVQITHVSSTDSPAASVDSETITLNSGTLQTFEILPSFHLQPTGTPGTYLLQTSSSQGLPLTLTTNPTVTLAAAAPASPEQIIVHALSPEHLLNTSDNVTVQCHTPRVIIQTVATEDITSSLSQEELTVDSDLHSSDFPEPPDALEADTFPDEIPRPKMTIQPSFNNAHVSKFSDQNSTELMNSVMVRTEEEIADTDLKQEEPPSDLASAYVTEDLESPTIVHQVHQTIDDETILIVPSPHGFIQASDVIDTESVLPLTTLTDPIFQHHQEASNIIGSSLGSPVSEDSKDVEDLVNCH</sequence>
<reference key="1">
    <citation type="journal article" date="1996" name="Mol. Cell. Biol.">
        <title>Interaction of D-type cyclins with a novel myb-like transcription factor, DMP1.</title>
        <authorList>
            <person name="Hirai H."/>
            <person name="Sherr C.J."/>
        </authorList>
    </citation>
    <scope>NUCLEOTIDE SEQUENCE [MRNA] (ISOFORM 1)</scope>
    <scope>FUNCTION</scope>
    <scope>DNA-BINDING</scope>
    <scope>INTERACTION WITH CCND1; CCND2 AND CCND3</scope>
    <scope>TISSUE SPECIFICITY</scope>
    <scope>DEVELOPMENTAL STAGE</scope>
    <scope>PHOSPHORYLATION</scope>
    <source>
        <strain>C57BL/Kaplan</strain>
    </source>
</reference>
<reference key="2">
    <citation type="journal article" date="2005" name="Science">
        <title>The transcriptional landscape of the mammalian genome.</title>
        <authorList>
            <person name="Carninci P."/>
            <person name="Kasukawa T."/>
            <person name="Katayama S."/>
            <person name="Gough J."/>
            <person name="Frith M.C."/>
            <person name="Maeda N."/>
            <person name="Oyama R."/>
            <person name="Ravasi T."/>
            <person name="Lenhard B."/>
            <person name="Wells C."/>
            <person name="Kodzius R."/>
            <person name="Shimokawa K."/>
            <person name="Bajic V.B."/>
            <person name="Brenner S.E."/>
            <person name="Batalov S."/>
            <person name="Forrest A.R."/>
            <person name="Zavolan M."/>
            <person name="Davis M.J."/>
            <person name="Wilming L.G."/>
            <person name="Aidinis V."/>
            <person name="Allen J.E."/>
            <person name="Ambesi-Impiombato A."/>
            <person name="Apweiler R."/>
            <person name="Aturaliya R.N."/>
            <person name="Bailey T.L."/>
            <person name="Bansal M."/>
            <person name="Baxter L."/>
            <person name="Beisel K.W."/>
            <person name="Bersano T."/>
            <person name="Bono H."/>
            <person name="Chalk A.M."/>
            <person name="Chiu K.P."/>
            <person name="Choudhary V."/>
            <person name="Christoffels A."/>
            <person name="Clutterbuck D.R."/>
            <person name="Crowe M.L."/>
            <person name="Dalla E."/>
            <person name="Dalrymple B.P."/>
            <person name="de Bono B."/>
            <person name="Della Gatta G."/>
            <person name="di Bernardo D."/>
            <person name="Down T."/>
            <person name="Engstrom P."/>
            <person name="Fagiolini M."/>
            <person name="Faulkner G."/>
            <person name="Fletcher C.F."/>
            <person name="Fukushima T."/>
            <person name="Furuno M."/>
            <person name="Futaki S."/>
            <person name="Gariboldi M."/>
            <person name="Georgii-Hemming P."/>
            <person name="Gingeras T.R."/>
            <person name="Gojobori T."/>
            <person name="Green R.E."/>
            <person name="Gustincich S."/>
            <person name="Harbers M."/>
            <person name="Hayashi Y."/>
            <person name="Hensch T.K."/>
            <person name="Hirokawa N."/>
            <person name="Hill D."/>
            <person name="Huminiecki L."/>
            <person name="Iacono M."/>
            <person name="Ikeo K."/>
            <person name="Iwama A."/>
            <person name="Ishikawa T."/>
            <person name="Jakt M."/>
            <person name="Kanapin A."/>
            <person name="Katoh M."/>
            <person name="Kawasawa Y."/>
            <person name="Kelso J."/>
            <person name="Kitamura H."/>
            <person name="Kitano H."/>
            <person name="Kollias G."/>
            <person name="Krishnan S.P."/>
            <person name="Kruger A."/>
            <person name="Kummerfeld S.K."/>
            <person name="Kurochkin I.V."/>
            <person name="Lareau L.F."/>
            <person name="Lazarevic D."/>
            <person name="Lipovich L."/>
            <person name="Liu J."/>
            <person name="Liuni S."/>
            <person name="McWilliam S."/>
            <person name="Madan Babu M."/>
            <person name="Madera M."/>
            <person name="Marchionni L."/>
            <person name="Matsuda H."/>
            <person name="Matsuzawa S."/>
            <person name="Miki H."/>
            <person name="Mignone F."/>
            <person name="Miyake S."/>
            <person name="Morris K."/>
            <person name="Mottagui-Tabar S."/>
            <person name="Mulder N."/>
            <person name="Nakano N."/>
            <person name="Nakauchi H."/>
            <person name="Ng P."/>
            <person name="Nilsson R."/>
            <person name="Nishiguchi S."/>
            <person name="Nishikawa S."/>
            <person name="Nori F."/>
            <person name="Ohara O."/>
            <person name="Okazaki Y."/>
            <person name="Orlando V."/>
            <person name="Pang K.C."/>
            <person name="Pavan W.J."/>
            <person name="Pavesi G."/>
            <person name="Pesole G."/>
            <person name="Petrovsky N."/>
            <person name="Piazza S."/>
            <person name="Reed J."/>
            <person name="Reid J.F."/>
            <person name="Ring B.Z."/>
            <person name="Ringwald M."/>
            <person name="Rost B."/>
            <person name="Ruan Y."/>
            <person name="Salzberg S.L."/>
            <person name="Sandelin A."/>
            <person name="Schneider C."/>
            <person name="Schoenbach C."/>
            <person name="Sekiguchi K."/>
            <person name="Semple C.A."/>
            <person name="Seno S."/>
            <person name="Sessa L."/>
            <person name="Sheng Y."/>
            <person name="Shibata Y."/>
            <person name="Shimada H."/>
            <person name="Shimada K."/>
            <person name="Silva D."/>
            <person name="Sinclair B."/>
            <person name="Sperling S."/>
            <person name="Stupka E."/>
            <person name="Sugiura K."/>
            <person name="Sultana R."/>
            <person name="Takenaka Y."/>
            <person name="Taki K."/>
            <person name="Tammoja K."/>
            <person name="Tan S.L."/>
            <person name="Tang S."/>
            <person name="Taylor M.S."/>
            <person name="Tegner J."/>
            <person name="Teichmann S.A."/>
            <person name="Ueda H.R."/>
            <person name="van Nimwegen E."/>
            <person name="Verardo R."/>
            <person name="Wei C.L."/>
            <person name="Yagi K."/>
            <person name="Yamanishi H."/>
            <person name="Zabarovsky E."/>
            <person name="Zhu S."/>
            <person name="Zimmer A."/>
            <person name="Hide W."/>
            <person name="Bult C."/>
            <person name="Grimmond S.M."/>
            <person name="Teasdale R.D."/>
            <person name="Liu E.T."/>
            <person name="Brusic V."/>
            <person name="Quackenbush J."/>
            <person name="Wahlestedt C."/>
            <person name="Mattick J.S."/>
            <person name="Hume D.A."/>
            <person name="Kai C."/>
            <person name="Sasaki D."/>
            <person name="Tomaru Y."/>
            <person name="Fukuda S."/>
            <person name="Kanamori-Katayama M."/>
            <person name="Suzuki M."/>
            <person name="Aoki J."/>
            <person name="Arakawa T."/>
            <person name="Iida J."/>
            <person name="Imamura K."/>
            <person name="Itoh M."/>
            <person name="Kato T."/>
            <person name="Kawaji H."/>
            <person name="Kawagashira N."/>
            <person name="Kawashima T."/>
            <person name="Kojima M."/>
            <person name="Kondo S."/>
            <person name="Konno H."/>
            <person name="Nakano K."/>
            <person name="Ninomiya N."/>
            <person name="Nishio T."/>
            <person name="Okada M."/>
            <person name="Plessy C."/>
            <person name="Shibata K."/>
            <person name="Shiraki T."/>
            <person name="Suzuki S."/>
            <person name="Tagami M."/>
            <person name="Waki K."/>
            <person name="Watahiki A."/>
            <person name="Okamura-Oho Y."/>
            <person name="Suzuki H."/>
            <person name="Kawai J."/>
            <person name="Hayashizaki Y."/>
        </authorList>
    </citation>
    <scope>NUCLEOTIDE SEQUENCE [LARGE SCALE MRNA] (ISOFORMS 1; 2; 3 AND 5)</scope>
    <scope>NUCLEOTIDE SEQUENCE [LARGE SCALE MRNA] OF 1-276 (ISOFORM 4)</scope>
    <source>
        <strain>C57BL/6J</strain>
        <tissue>Corpora quadrigemina</tissue>
        <tissue>Embryo</tissue>
        <tissue>Medulla oblongata</tissue>
        <tissue>Skin</tissue>
        <tissue>Spinal cord</tissue>
    </source>
</reference>
<reference key="3">
    <citation type="journal article" date="2004" name="Genome Res.">
        <title>The status, quality, and expansion of the NIH full-length cDNA project: the Mammalian Gene Collection (MGC).</title>
        <authorList>
            <consortium name="The MGC Project Team"/>
        </authorList>
    </citation>
    <scope>NUCLEOTIDE SEQUENCE [LARGE SCALE MRNA] (ISOFORM 4)</scope>
    <source>
        <tissue>Olfactory epithelium</tissue>
    </source>
</reference>
<reference key="4">
    <citation type="journal article" date="1998" name="J. Biol. Chem.">
        <title>Regulation of the CD13/aminopeptidase N gene by DMP1, a transcription factor antagonized by D-type cyclins.</title>
        <authorList>
            <person name="Inoue K."/>
            <person name="Sherr C.J."/>
            <person name="Shapiro L.H."/>
        </authorList>
    </citation>
    <scope>FUNCTION</scope>
    <scope>DNA-BINDING</scope>
    <scope>MUTAGENESIS OF LYS-319</scope>
</reference>
<reference key="5">
    <citation type="journal article" date="1998" name="Mol. Cell. Biol.">
        <title>Gene expression and cell cycle arrest mediated by transcription factor DMP1 is antagonized by D-type cyclins through a cyclin-dependent-kinase-independent mechanism.</title>
        <authorList>
            <person name="Inoue K."/>
            <person name="Sherr C.J."/>
        </authorList>
    </citation>
    <scope>FUNCTION</scope>
    <scope>DNA-BINDING</scope>
    <scope>INTERACTION WITH CCND1 AND CCND2</scope>
    <scope>SUBCELLULAR LOCATION</scope>
    <scope>PHOSPHORYLATION</scope>
    <scope>MUTAGENESIS OF LYS-319</scope>
</reference>
<reference key="6">
    <citation type="journal article" date="1999" name="Proc. Natl. Acad. Sci. U.S.A.">
        <title>Induction of ARF tumor suppressor gene expression and cell cycle arrest by transcription factor DMP1.</title>
        <authorList>
            <person name="Inoue K."/>
            <person name="Roussel M.F."/>
            <person name="Sherr C.J."/>
        </authorList>
    </citation>
    <scope>FUNCTION</scope>
    <scope>DNA-BINDING</scope>
    <scope>SUBCELLULAR LOCATION</scope>
</reference>
<reference key="7">
    <citation type="journal article" date="2000" name="Genes Dev.">
        <title>Disruption of the ARF transcriptional activator DMP1 facilitates cell immortalization, Ras transformation, and tumorigenesis.</title>
        <authorList>
            <person name="Inoue K."/>
            <person name="Wen R."/>
            <person name="Rehg J.E."/>
            <person name="Adachi M."/>
            <person name="Cleveland J.L."/>
            <person name="Roussel M.F."/>
            <person name="Sherr C.J."/>
        </authorList>
    </citation>
    <scope>FUNCTION</scope>
    <scope>DISRUPTION PHENOTYPE</scope>
    <scope>TISSUE SPECIFICITY</scope>
</reference>
<reference key="8">
    <citation type="journal article" date="2001" name="Genes Dev.">
        <title>Dmp1 is haplo-insufficient for tumor suppression and modifies the frequencies of Arf and p53 mutations in Myc-induced lymphomas.</title>
        <authorList>
            <person name="Inoue K."/>
            <person name="Zindy F."/>
            <person name="Randle D.H."/>
            <person name="Rehg J.E."/>
            <person name="Sherr C.J."/>
        </authorList>
    </citation>
    <scope>FUNCTION</scope>
    <scope>DISRUPTION PHENOTYPE</scope>
</reference>
<reference key="9">
    <citation type="journal article" date="2005" name="Mol. Cell. Biol.">
        <title>Ras-Raf-Arf signaling critically depends on the Dmp1 transcription factor.</title>
        <authorList>
            <person name="Sreeramaneni R."/>
            <person name="Chaudhry A."/>
            <person name="McMahon M."/>
            <person name="Sherr C.J."/>
            <person name="Inoue K."/>
        </authorList>
    </citation>
    <scope>FUNCTION</scope>
    <scope>INDUCTION</scope>
</reference>
<reference key="10">
    <citation type="journal article" date="2006" name="Oncogene">
        <title>Expression of Dmp1 in specific differentiated, nonproliferating cells and its regulation by E2Fs.</title>
        <authorList>
            <person name="Mallakin A."/>
            <person name="Taneja P."/>
            <person name="Matise L.A."/>
            <person name="Willingham M.C."/>
            <person name="Inoue K."/>
        </authorList>
    </citation>
    <scope>SUBCELLULAR LOCATION</scope>
    <scope>TISSUE SPECIFICITY</scope>
    <scope>DEVELOPMENTAL STAGE</scope>
    <scope>INDUCTION</scope>
</reference>
<reference key="11">
    <citation type="journal article" date="2007" name="Cancer Cell">
        <title>Mutually exclusive inactivation of DMP1 and ARF/p53 in lung cancer.</title>
        <authorList>
            <person name="Mallakin A."/>
            <person name="Sugiyama T."/>
            <person name="Taneja P."/>
            <person name="Matise L.A."/>
            <person name="Frazier D.P."/>
            <person name="Choudhary M."/>
            <person name="Hawkins G.A."/>
            <person name="D'Agostino R.B. Jr."/>
            <person name="Willingham M.C."/>
            <person name="Inoue K."/>
        </authorList>
    </citation>
    <scope>FUNCTION</scope>
    <scope>DISRUPTION PHENOTYPE</scope>
    <scope>SUBCELLULAR LOCATION</scope>
</reference>
<reference key="12">
    <citation type="journal article" date="2007" name="Oncogene">
        <title>Repression of Dmp1 and Arf transcription by anthracyclins: critical roles of the NF-kappaB subunit p65.</title>
        <authorList>
            <person name="Taneja P."/>
            <person name="Mallakin A."/>
            <person name="Matise L.A."/>
            <person name="Frazier D.P."/>
            <person name="Choudhary M."/>
            <person name="Inoue K."/>
        </authorList>
    </citation>
    <scope>INDUCTION</scope>
</reference>